<organism>
    <name type="scientific">Mycobacterium bovis (strain ATCC BAA-935 / AF2122/97)</name>
    <dbReference type="NCBI Taxonomy" id="233413"/>
    <lineage>
        <taxon>Bacteria</taxon>
        <taxon>Bacillati</taxon>
        <taxon>Actinomycetota</taxon>
        <taxon>Actinomycetes</taxon>
        <taxon>Mycobacteriales</taxon>
        <taxon>Mycobacteriaceae</taxon>
        <taxon>Mycobacterium</taxon>
        <taxon>Mycobacterium tuberculosis complex</taxon>
    </lineage>
</organism>
<reference key="1">
    <citation type="journal article" date="2003" name="Proc. Natl. Acad. Sci. U.S.A.">
        <title>The complete genome sequence of Mycobacterium bovis.</title>
        <authorList>
            <person name="Garnier T."/>
            <person name="Eiglmeier K."/>
            <person name="Camus J.-C."/>
            <person name="Medina N."/>
            <person name="Mansoor H."/>
            <person name="Pryor M."/>
            <person name="Duthoy S."/>
            <person name="Grondin S."/>
            <person name="Lacroix C."/>
            <person name="Monsempe C."/>
            <person name="Simon S."/>
            <person name="Harris B."/>
            <person name="Atkin R."/>
            <person name="Doggett J."/>
            <person name="Mayes R."/>
            <person name="Keating L."/>
            <person name="Wheeler P.R."/>
            <person name="Parkhill J."/>
            <person name="Barrell B.G."/>
            <person name="Cole S.T."/>
            <person name="Gordon S.V."/>
            <person name="Hewinson R.G."/>
        </authorList>
    </citation>
    <scope>NUCLEOTIDE SEQUENCE [LARGE SCALE GENOMIC DNA]</scope>
    <source>
        <strain>ATCC BAA-935 / AF2122/97</strain>
    </source>
</reference>
<reference key="2">
    <citation type="journal article" date="2017" name="Genome Announc.">
        <title>Updated reference genome sequence and annotation of Mycobacterium bovis AF2122/97.</title>
        <authorList>
            <person name="Malone K.M."/>
            <person name="Farrell D."/>
            <person name="Stuber T.P."/>
            <person name="Schubert O.T."/>
            <person name="Aebersold R."/>
            <person name="Robbe-Austerman S."/>
            <person name="Gordon S.V."/>
        </authorList>
    </citation>
    <scope>NUCLEOTIDE SEQUENCE [LARGE SCALE GENOMIC DNA]</scope>
    <scope>GENOME REANNOTATION</scope>
    <source>
        <strain>ATCC BAA-935 / AF2122/97</strain>
    </source>
</reference>
<proteinExistence type="inferred from homology"/>
<evidence type="ECO:0000255" key="1">
    <source>
        <dbReference type="HAMAP-Rule" id="MF_02122"/>
    </source>
</evidence>
<name>DAPD_MYCBO</name>
<gene>
    <name evidence="1" type="primary">dapD</name>
    <name type="ordered locus">BQ2027_MB1233C</name>
</gene>
<feature type="chain" id="PRO_0000412255" description="2,3,4,5-tetrahydropyridine-2,6-dicarboxylate N-succinyltransferase">
    <location>
        <begin position="1"/>
        <end position="317"/>
    </location>
</feature>
<feature type="active site" description="Acyl-anhydride intermediate" evidence="1">
    <location>
        <position position="199"/>
    </location>
</feature>
<feature type="binding site" evidence="1">
    <location>
        <position position="166"/>
    </location>
    <ligand>
        <name>Mg(2+)</name>
        <dbReference type="ChEBI" id="CHEBI:18420"/>
        <label>1</label>
        <note>ligand shared between trimeric partners</note>
    </ligand>
</feature>
<feature type="binding site" evidence="1">
    <location>
        <position position="183"/>
    </location>
    <ligand>
        <name>Mg(2+)</name>
        <dbReference type="ChEBI" id="CHEBI:18420"/>
        <label>2</label>
        <note>ligand shared between trimeric partners</note>
    </ligand>
</feature>
<feature type="binding site" evidence="1">
    <location>
        <position position="201"/>
    </location>
    <ligand>
        <name>succinyl-CoA</name>
        <dbReference type="ChEBI" id="CHEBI:57292"/>
    </ligand>
</feature>
<feature type="binding site" evidence="1">
    <location>
        <position position="216"/>
    </location>
    <ligand>
        <name>succinyl-CoA</name>
        <dbReference type="ChEBI" id="CHEBI:57292"/>
    </ligand>
</feature>
<feature type="binding site" evidence="1">
    <location>
        <position position="219"/>
    </location>
    <ligand>
        <name>succinyl-CoA</name>
        <dbReference type="ChEBI" id="CHEBI:57292"/>
    </ligand>
</feature>
<feature type="binding site" evidence="1">
    <location>
        <position position="242"/>
    </location>
    <ligand>
        <name>succinyl-CoA</name>
        <dbReference type="ChEBI" id="CHEBI:57292"/>
    </ligand>
</feature>
<feature type="binding site" evidence="1">
    <location>
        <begin position="257"/>
        <end position="258"/>
    </location>
    <ligand>
        <name>succinyl-CoA</name>
        <dbReference type="ChEBI" id="CHEBI:57292"/>
    </ligand>
</feature>
<feature type="binding site" evidence="1">
    <location>
        <position position="265"/>
    </location>
    <ligand>
        <name>succinyl-CoA</name>
        <dbReference type="ChEBI" id="CHEBI:57292"/>
    </ligand>
</feature>
<feature type="binding site" evidence="1">
    <location>
        <position position="277"/>
    </location>
    <ligand>
        <name>succinyl-CoA</name>
        <dbReference type="ChEBI" id="CHEBI:57292"/>
    </ligand>
</feature>
<feature type="binding site" evidence="1">
    <location>
        <begin position="290"/>
        <end position="293"/>
    </location>
    <ligand>
        <name>succinyl-CoA</name>
        <dbReference type="ChEBI" id="CHEBI:57292"/>
    </ligand>
</feature>
<protein>
    <recommendedName>
        <fullName evidence="1">2,3,4,5-tetrahydropyridine-2,6-dicarboxylate N-succinyltransferase</fullName>
        <ecNumber evidence="1">2.3.1.117</ecNumber>
    </recommendedName>
    <alternativeName>
        <fullName evidence="1">Tetrahydrodipicolinate N-succinyltransferase</fullName>
        <shortName evidence="1">THDP succinyltransferase</shortName>
        <shortName evidence="1">THP succinyltransferase</shortName>
    </alternativeName>
    <alternativeName>
        <fullName evidence="1">Tetrahydropicolinate succinylase</fullName>
    </alternativeName>
</protein>
<keyword id="KW-0012">Acyltransferase</keyword>
<keyword id="KW-0028">Amino-acid biosynthesis</keyword>
<keyword id="KW-0963">Cytoplasm</keyword>
<keyword id="KW-0220">Diaminopimelate biosynthesis</keyword>
<keyword id="KW-0457">Lysine biosynthesis</keyword>
<keyword id="KW-0460">Magnesium</keyword>
<keyword id="KW-0479">Metal-binding</keyword>
<keyword id="KW-1185">Reference proteome</keyword>
<keyword id="KW-0808">Transferase</keyword>
<comment type="function">
    <text evidence="1">Catalyzes the conversion of the cyclic tetrahydrodipicolinate (THDP) into the acyclic N-succinyl-L-2-amino-6-oxopimelate using succinyl-CoA.</text>
</comment>
<comment type="catalytic activity">
    <reaction evidence="1">
        <text>(S)-2,3,4,5-tetrahydrodipicolinate + succinyl-CoA + H2O = (S)-2-succinylamino-6-oxoheptanedioate + CoA</text>
        <dbReference type="Rhea" id="RHEA:17325"/>
        <dbReference type="ChEBI" id="CHEBI:15377"/>
        <dbReference type="ChEBI" id="CHEBI:15685"/>
        <dbReference type="ChEBI" id="CHEBI:16845"/>
        <dbReference type="ChEBI" id="CHEBI:57287"/>
        <dbReference type="ChEBI" id="CHEBI:57292"/>
        <dbReference type="EC" id="2.3.1.117"/>
    </reaction>
</comment>
<comment type="pathway">
    <text evidence="1">Amino-acid biosynthesis; L-lysine biosynthesis via DAP pathway; LL-2,6-diaminopimelate from (S)-tetrahydrodipicolinate (succinylase route): step 1/3.</text>
</comment>
<comment type="subunit">
    <text evidence="1">Homotrimer.</text>
</comment>
<comment type="subcellular location">
    <subcellularLocation>
        <location evidence="1">Cytoplasm</location>
    </subcellularLocation>
</comment>
<comment type="similarity">
    <text evidence="1">Belongs to the type 2 tetrahydrodipicolinate N-succinyltransferase family.</text>
</comment>
<dbReference type="EC" id="2.3.1.117" evidence="1"/>
<dbReference type="EMBL" id="LT708304">
    <property type="protein sequence ID" value="SIT99834.1"/>
    <property type="molecule type" value="Genomic_DNA"/>
</dbReference>
<dbReference type="RefSeq" id="NP_854887.1">
    <property type="nucleotide sequence ID" value="NC_002945.3"/>
</dbReference>
<dbReference type="RefSeq" id="WP_003898768.1">
    <property type="nucleotide sequence ID" value="NC_002945.4"/>
</dbReference>
<dbReference type="SMR" id="Q7U0E7"/>
<dbReference type="KEGG" id="mbo:BQ2027_MB1233C"/>
<dbReference type="PATRIC" id="fig|233413.5.peg.1352"/>
<dbReference type="UniPathway" id="UPA00034">
    <property type="reaction ID" value="UER00019"/>
</dbReference>
<dbReference type="Proteomes" id="UP000001419">
    <property type="component" value="Chromosome"/>
</dbReference>
<dbReference type="GO" id="GO:0005737">
    <property type="term" value="C:cytoplasm"/>
    <property type="evidence" value="ECO:0007669"/>
    <property type="project" value="UniProtKB-SubCell"/>
</dbReference>
<dbReference type="GO" id="GO:0008666">
    <property type="term" value="F:2,3,4,5-tetrahydropyridine-2,6-dicarboxylate N-succinyltransferase activity"/>
    <property type="evidence" value="ECO:0007669"/>
    <property type="project" value="UniProtKB-UniRule"/>
</dbReference>
<dbReference type="GO" id="GO:0000287">
    <property type="term" value="F:magnesium ion binding"/>
    <property type="evidence" value="ECO:0007669"/>
    <property type="project" value="UniProtKB-UniRule"/>
</dbReference>
<dbReference type="GO" id="GO:0019877">
    <property type="term" value="P:diaminopimelate biosynthetic process"/>
    <property type="evidence" value="ECO:0007669"/>
    <property type="project" value="UniProtKB-UniRule"/>
</dbReference>
<dbReference type="GO" id="GO:0009089">
    <property type="term" value="P:lysine biosynthetic process via diaminopimelate"/>
    <property type="evidence" value="ECO:0007669"/>
    <property type="project" value="UniProtKB-UniRule"/>
</dbReference>
<dbReference type="CDD" id="cd04649">
    <property type="entry name" value="LbH_THP_succinylT_putative"/>
    <property type="match status" value="1"/>
</dbReference>
<dbReference type="FunFam" id="2.160.10.10:FF:000009">
    <property type="entry name" value="2,3,4,5-tetrahydropyridine-2,6-dicarboxylate N-succinyltransferase"/>
    <property type="match status" value="1"/>
</dbReference>
<dbReference type="FunFam" id="3.30.70.2010:FF:000002">
    <property type="entry name" value="2,3,4,5-tetrahydropyridine-2,6-dicarboxylate N-succinyltransferase"/>
    <property type="match status" value="1"/>
</dbReference>
<dbReference type="Gene3D" id="3.30.70.2010">
    <property type="match status" value="1"/>
</dbReference>
<dbReference type="Gene3D" id="2.160.10.10">
    <property type="entry name" value="Hexapeptide repeat proteins"/>
    <property type="match status" value="1"/>
</dbReference>
<dbReference type="Gene3D" id="3.30.60.70">
    <property type="entry name" value="Trimeric LpxA-like enzymes"/>
    <property type="match status" value="1"/>
</dbReference>
<dbReference type="HAMAP" id="MF_02122">
    <property type="entry name" value="DapD_type2"/>
    <property type="match status" value="1"/>
</dbReference>
<dbReference type="InterPro" id="IPR019875">
    <property type="entry name" value="DapD_actinobacteria"/>
</dbReference>
<dbReference type="InterPro" id="IPR001451">
    <property type="entry name" value="Hexapep"/>
</dbReference>
<dbReference type="InterPro" id="IPR032784">
    <property type="entry name" value="THDPS_M"/>
</dbReference>
<dbReference type="InterPro" id="IPR038361">
    <property type="entry name" value="THDPS_M_sf"/>
</dbReference>
<dbReference type="InterPro" id="IPR011004">
    <property type="entry name" value="Trimer_LpxA-like_sf"/>
</dbReference>
<dbReference type="InterPro" id="IPR026586">
    <property type="entry name" value="Type2_DapD"/>
</dbReference>
<dbReference type="NCBIfam" id="TIGR03535">
    <property type="entry name" value="DapD_actino"/>
    <property type="match status" value="1"/>
</dbReference>
<dbReference type="Pfam" id="PF14602">
    <property type="entry name" value="Hexapep_2"/>
    <property type="match status" value="1"/>
</dbReference>
<dbReference type="Pfam" id="PF14789">
    <property type="entry name" value="THDPS_M"/>
    <property type="match status" value="1"/>
</dbReference>
<dbReference type="SUPFAM" id="SSF51161">
    <property type="entry name" value="Trimeric LpxA-like enzymes"/>
    <property type="match status" value="1"/>
</dbReference>
<sequence>MSTVTGAAGIGLATLAADGSVLDTWFPAPELTESGTSATSRLAVSDVPVELAALIGRDDDRRTETIAVRTVIGSLDDVAADPYDAYLRLHLLSHRLVAPHGLNAGGLFGVLTNVVWTNHGPCAIDGFEAVRARLRRRGPVTVYGVDKFPRMVDYVVPTGVRIADADRVRLGAHLAPGTTVMHEGFVNYNAGTLGASMVEGRISAGVVVGDGSDVGGGASIMGTLSGGGTHVISIGKRCLLGANSGLGISLGDDCVVEAGLYVTAGTRVTMPDSNSVKARELSGSSNLLFRRNSVSGAVEVLARDGQGIALNEDLHAN</sequence>
<accession>Q7U0E7</accession>
<accession>A0A1R3XXP4</accession>
<accession>X2BHN4</accession>